<sequence>MYLGFWLSRLCRGLSRPIGKTMRPIWGSLSRNLALSSQRIPEFSSFVARTNTCGELRSSHLGQEVTLCGWIQYRRQNTFLVLRDCHGLVQILIPQDESAASVRRILCEAPVESVVRVSGTVISRPPGQENPKMPTGEIEIKVKTAELLNACKKLPFEIKDFVKKTEALRLQYRYLDLRSFQMQYNLRLRSQMVMKMREYLCNLHGFVDIETPTLFKRTPGGAKEFLVPSREPGKFYSLPQSPQQFKQLLMVGGLDRYFQVARCYRDEGSRPDRQPEFTQIDIEMSFVEQTGIQRLVEGLLQYSWPGDKDPLVTPFPSMTFAEALATYGTDKPDTRFGMKIVDVSDVFRNTELRFLQDALAKPQGTVKAICVHDGAKYLRKEDIEFIRKFAVHHFSQEVLPIFLNAKKNWSSPFAKFIMEEERLELARSMEIQEEDIVLLTAGEHEKACSLLGKLRLECADLLEMRGAVLRDPAVFSFLWVVDFPLFLAKEESPTELESAHHPFTAPNSSDIHLLYTEPEKVRGQHYDLVLNGNEIGGGSVRIHDAQLQRYILETLLKEDVKLLSHLLQALDYGAPPHGGIALGLDRLVCLVTGAPSIRDVIAFPKSYRGQDLMSNAPDSVSPEELKPYHIHVLWPADSEEESASATPSKHLSS</sequence>
<accession>Q8BIP0</accession>
<accession>Q5FWV4</accession>
<protein>
    <recommendedName>
        <fullName>Aspartate--tRNA ligase, mitochondrial</fullName>
        <ecNumber evidence="3">6.1.1.12</ecNumber>
    </recommendedName>
    <alternativeName>
        <fullName>Aspartyl-tRNA synthetase</fullName>
        <shortName>AspRS</shortName>
    </alternativeName>
</protein>
<evidence type="ECO:0000250" key="1"/>
<evidence type="ECO:0000250" key="2">
    <source>
        <dbReference type="UniProtKB" id="Q3KRD0"/>
    </source>
</evidence>
<evidence type="ECO:0000250" key="3">
    <source>
        <dbReference type="UniProtKB" id="Q6PI48"/>
    </source>
</evidence>
<evidence type="ECO:0000255" key="4"/>
<evidence type="ECO:0000305" key="5"/>
<proteinExistence type="evidence at protein level"/>
<keyword id="KW-0030">Aminoacyl-tRNA synthetase</keyword>
<keyword id="KW-0067">ATP-binding</keyword>
<keyword id="KW-0436">Ligase</keyword>
<keyword id="KW-0472">Membrane</keyword>
<keyword id="KW-0496">Mitochondrion</keyword>
<keyword id="KW-0547">Nucleotide-binding</keyword>
<keyword id="KW-0597">Phosphoprotein</keyword>
<keyword id="KW-0648">Protein biosynthesis</keyword>
<keyword id="KW-1185">Reference proteome</keyword>
<keyword id="KW-0809">Transit peptide</keyword>
<comment type="function">
    <text evidence="3">Catalyzes the attachment of aspartate to tRNA(Asp) in a two-step reaction: aspartate is first activated by ATP to form Asp-AMP and then transferred to the acceptor end of tRNA(Asp).</text>
</comment>
<comment type="catalytic activity">
    <reaction evidence="3">
        <text>tRNA(Asp) + L-aspartate + ATP = L-aspartyl-tRNA(Asp) + AMP + diphosphate</text>
        <dbReference type="Rhea" id="RHEA:19649"/>
        <dbReference type="Rhea" id="RHEA-COMP:9660"/>
        <dbReference type="Rhea" id="RHEA-COMP:9678"/>
        <dbReference type="ChEBI" id="CHEBI:29991"/>
        <dbReference type="ChEBI" id="CHEBI:30616"/>
        <dbReference type="ChEBI" id="CHEBI:33019"/>
        <dbReference type="ChEBI" id="CHEBI:78442"/>
        <dbReference type="ChEBI" id="CHEBI:78516"/>
        <dbReference type="ChEBI" id="CHEBI:456215"/>
        <dbReference type="EC" id="6.1.1.12"/>
    </reaction>
</comment>
<comment type="subunit">
    <text evidence="3">Homodimer.</text>
</comment>
<comment type="subcellular location">
    <subcellularLocation>
        <location evidence="3">Mitochondrion matrix</location>
    </subcellularLocation>
    <subcellularLocation>
        <location evidence="3">Mitochondrion membrane</location>
    </subcellularLocation>
</comment>
<comment type="similarity">
    <text evidence="5">Belongs to the class-II aminoacyl-tRNA synthetase family. Type 1 subfamily.</text>
</comment>
<gene>
    <name type="primary">Dars2</name>
</gene>
<feature type="transit peptide" description="Mitochondrion" evidence="4">
    <location>
        <begin position="1"/>
        <end position="46"/>
    </location>
</feature>
<feature type="chain" id="PRO_0000250737" description="Aspartate--tRNA ligase, mitochondrial">
    <location>
        <begin position="47"/>
        <end position="653"/>
    </location>
</feature>
<feature type="region of interest" description="Aspartate" evidence="1">
    <location>
        <begin position="243"/>
        <end position="246"/>
    </location>
</feature>
<feature type="binding site" evidence="1">
    <location>
        <begin position="265"/>
        <end position="267"/>
    </location>
    <ligand>
        <name>ATP</name>
        <dbReference type="ChEBI" id="CHEBI:30616"/>
    </ligand>
</feature>
<feature type="binding site" evidence="1">
    <location>
        <position position="265"/>
    </location>
    <ligand>
        <name>L-aspartate</name>
        <dbReference type="ChEBI" id="CHEBI:29991"/>
    </ligand>
</feature>
<feature type="binding site" evidence="1">
    <location>
        <position position="534"/>
    </location>
    <ligand>
        <name>ATP</name>
        <dbReference type="ChEBI" id="CHEBI:30616"/>
    </ligand>
</feature>
<feature type="binding site" evidence="1">
    <location>
        <position position="541"/>
    </location>
    <ligand>
        <name>L-aspartate</name>
        <dbReference type="ChEBI" id="CHEBI:29991"/>
    </ligand>
</feature>
<feature type="binding site" evidence="1">
    <location>
        <begin position="583"/>
        <end position="586"/>
    </location>
    <ligand>
        <name>ATP</name>
        <dbReference type="ChEBI" id="CHEBI:30616"/>
    </ligand>
</feature>
<feature type="modified residue" description="Phosphothreonine" evidence="2">
    <location>
        <position position="218"/>
    </location>
</feature>
<feature type="modified residue" description="Phosphoserine" evidence="3">
    <location>
        <position position="241"/>
    </location>
</feature>
<feature type="sequence conflict" description="In Ref. 2; AAH89191." evidence="5" ref="2">
    <original>I</original>
    <variation>V</variation>
    <location>
        <position position="71"/>
    </location>
</feature>
<feature type="sequence conflict" description="In Ref. 2; AAH89191." evidence="5" ref="2">
    <original>R</original>
    <variation>G</variation>
    <location>
        <position position="104"/>
    </location>
</feature>
<feature type="sequence conflict" description="In Ref. 2; AAH89191." evidence="5" ref="2">
    <original>V</original>
    <variation>A</variation>
    <location>
        <position position="540"/>
    </location>
</feature>
<name>SYDM_MOUSE</name>
<dbReference type="EC" id="6.1.1.12" evidence="3"/>
<dbReference type="EMBL" id="AK037337">
    <property type="protein sequence ID" value="BAC29789.1"/>
    <property type="molecule type" value="mRNA"/>
</dbReference>
<dbReference type="EMBL" id="AK138809">
    <property type="protein sequence ID" value="BAE23785.1"/>
    <property type="molecule type" value="mRNA"/>
</dbReference>
<dbReference type="EMBL" id="BC076606">
    <property type="protein sequence ID" value="AAH76606.1"/>
    <property type="molecule type" value="mRNA"/>
</dbReference>
<dbReference type="EMBL" id="BC089191">
    <property type="protein sequence ID" value="AAH89191.1"/>
    <property type="molecule type" value="mRNA"/>
</dbReference>
<dbReference type="CCDS" id="CCDS15413.1"/>
<dbReference type="RefSeq" id="NP_766232.1">
    <property type="nucleotide sequence ID" value="NM_172644.4"/>
</dbReference>
<dbReference type="SMR" id="Q8BIP0"/>
<dbReference type="BioGRID" id="230526">
    <property type="interactions" value="7"/>
</dbReference>
<dbReference type="FunCoup" id="Q8BIP0">
    <property type="interactions" value="2630"/>
</dbReference>
<dbReference type="STRING" id="10090.ENSMUSP00000041851"/>
<dbReference type="GlyGen" id="Q8BIP0">
    <property type="glycosylation" value="2 sites, 1 N-linked glycan (1 site)"/>
</dbReference>
<dbReference type="iPTMnet" id="Q8BIP0"/>
<dbReference type="PhosphoSitePlus" id="Q8BIP0"/>
<dbReference type="SwissPalm" id="Q8BIP0"/>
<dbReference type="PaxDb" id="10090-ENSMUSP00000041851"/>
<dbReference type="PeptideAtlas" id="Q8BIP0"/>
<dbReference type="ProteomicsDB" id="257517"/>
<dbReference type="Pumba" id="Q8BIP0"/>
<dbReference type="Antibodypedia" id="20564">
    <property type="antibodies" value="174 antibodies from 24 providers"/>
</dbReference>
<dbReference type="DNASU" id="226539"/>
<dbReference type="Ensembl" id="ENSMUST00000035430.4">
    <property type="protein sequence ID" value="ENSMUSP00000041851.4"/>
    <property type="gene ID" value="ENSMUSG00000026709.11"/>
</dbReference>
<dbReference type="GeneID" id="226539"/>
<dbReference type="KEGG" id="mmu:226539"/>
<dbReference type="UCSC" id="uc007dey.1">
    <property type="organism name" value="mouse"/>
</dbReference>
<dbReference type="AGR" id="MGI:2442510"/>
<dbReference type="CTD" id="55157"/>
<dbReference type="MGI" id="MGI:2442510">
    <property type="gene designation" value="Dars2"/>
</dbReference>
<dbReference type="VEuPathDB" id="HostDB:ENSMUSG00000026709"/>
<dbReference type="eggNOG" id="KOG2411">
    <property type="taxonomic scope" value="Eukaryota"/>
</dbReference>
<dbReference type="GeneTree" id="ENSGT01030000234618"/>
<dbReference type="HOGENOM" id="CLU_014330_3_1_1"/>
<dbReference type="InParanoid" id="Q8BIP0"/>
<dbReference type="OMA" id="LCGWVDR"/>
<dbReference type="OrthoDB" id="439710at2759"/>
<dbReference type="PhylomeDB" id="Q8BIP0"/>
<dbReference type="TreeFam" id="TF314827"/>
<dbReference type="BioGRID-ORCS" id="226539">
    <property type="hits" value="25 hits in 82 CRISPR screens"/>
</dbReference>
<dbReference type="ChiTaRS" id="Dars2">
    <property type="organism name" value="mouse"/>
</dbReference>
<dbReference type="PRO" id="PR:Q8BIP0"/>
<dbReference type="Proteomes" id="UP000000589">
    <property type="component" value="Chromosome 1"/>
</dbReference>
<dbReference type="RNAct" id="Q8BIP0">
    <property type="molecule type" value="protein"/>
</dbReference>
<dbReference type="Bgee" id="ENSMUSG00000026709">
    <property type="expression patterns" value="Expressed in epiblast (generic) and 237 other cell types or tissues"/>
</dbReference>
<dbReference type="GO" id="GO:0005759">
    <property type="term" value="C:mitochondrial matrix"/>
    <property type="evidence" value="ECO:0000250"/>
    <property type="project" value="UniProtKB"/>
</dbReference>
<dbReference type="GO" id="GO:0031966">
    <property type="term" value="C:mitochondrial membrane"/>
    <property type="evidence" value="ECO:0000250"/>
    <property type="project" value="UniProtKB"/>
</dbReference>
<dbReference type="GO" id="GO:0005739">
    <property type="term" value="C:mitochondrion"/>
    <property type="evidence" value="ECO:0007005"/>
    <property type="project" value="MGI"/>
</dbReference>
<dbReference type="GO" id="GO:0005654">
    <property type="term" value="C:nucleoplasm"/>
    <property type="evidence" value="ECO:0007669"/>
    <property type="project" value="Ensembl"/>
</dbReference>
<dbReference type="GO" id="GO:0004815">
    <property type="term" value="F:aspartate-tRNA ligase activity"/>
    <property type="evidence" value="ECO:0000250"/>
    <property type="project" value="UniProtKB"/>
</dbReference>
<dbReference type="GO" id="GO:0050560">
    <property type="term" value="F:aspartate-tRNA(Asn) ligase activity"/>
    <property type="evidence" value="ECO:0007669"/>
    <property type="project" value="Ensembl"/>
</dbReference>
<dbReference type="GO" id="GO:0005524">
    <property type="term" value="F:ATP binding"/>
    <property type="evidence" value="ECO:0007669"/>
    <property type="project" value="UniProtKB-KW"/>
</dbReference>
<dbReference type="GO" id="GO:0003676">
    <property type="term" value="F:nucleic acid binding"/>
    <property type="evidence" value="ECO:0007669"/>
    <property type="project" value="InterPro"/>
</dbReference>
<dbReference type="GO" id="GO:0042803">
    <property type="term" value="F:protein homodimerization activity"/>
    <property type="evidence" value="ECO:0007669"/>
    <property type="project" value="Ensembl"/>
</dbReference>
<dbReference type="GO" id="GO:0070145">
    <property type="term" value="P:mitochondrial asparaginyl-tRNA aminoacylation"/>
    <property type="evidence" value="ECO:0000250"/>
    <property type="project" value="UniProtKB"/>
</dbReference>
<dbReference type="CDD" id="cd00777">
    <property type="entry name" value="AspRS_core"/>
    <property type="match status" value="1"/>
</dbReference>
<dbReference type="CDD" id="cd04317">
    <property type="entry name" value="EcAspRS_like_N"/>
    <property type="match status" value="1"/>
</dbReference>
<dbReference type="FunFam" id="2.40.50.140:FF:000202">
    <property type="entry name" value="Aspartate--tRNA ligase, mitochondrial"/>
    <property type="match status" value="1"/>
</dbReference>
<dbReference type="FunFam" id="3.30.1360.30:FF:000002">
    <property type="entry name" value="Aspartate--tRNA ligase, mitochondrial"/>
    <property type="match status" value="1"/>
</dbReference>
<dbReference type="Gene3D" id="3.30.930.10">
    <property type="entry name" value="Bira Bifunctional Protein, Domain 2"/>
    <property type="match status" value="1"/>
</dbReference>
<dbReference type="Gene3D" id="3.30.1360.30">
    <property type="entry name" value="GAD-like domain"/>
    <property type="match status" value="1"/>
</dbReference>
<dbReference type="Gene3D" id="2.40.50.140">
    <property type="entry name" value="Nucleic acid-binding proteins"/>
    <property type="match status" value="1"/>
</dbReference>
<dbReference type="HAMAP" id="MF_00044">
    <property type="entry name" value="Asp_tRNA_synth_type1"/>
    <property type="match status" value="1"/>
</dbReference>
<dbReference type="InterPro" id="IPR004364">
    <property type="entry name" value="Aa-tRNA-synt_II"/>
</dbReference>
<dbReference type="InterPro" id="IPR006195">
    <property type="entry name" value="aa-tRNA-synth_II"/>
</dbReference>
<dbReference type="InterPro" id="IPR045864">
    <property type="entry name" value="aa-tRNA-synth_II/BPL/LPL"/>
</dbReference>
<dbReference type="InterPro" id="IPR004524">
    <property type="entry name" value="Asp-tRNA-ligase_1"/>
</dbReference>
<dbReference type="InterPro" id="IPR047089">
    <property type="entry name" value="Asp-tRNA-ligase_1_N"/>
</dbReference>
<dbReference type="InterPro" id="IPR002312">
    <property type="entry name" value="Asp/Asn-tRNA-synth_IIb"/>
</dbReference>
<dbReference type="InterPro" id="IPR047090">
    <property type="entry name" value="AspRS_core"/>
</dbReference>
<dbReference type="InterPro" id="IPR004115">
    <property type="entry name" value="GAD-like_sf"/>
</dbReference>
<dbReference type="InterPro" id="IPR029351">
    <property type="entry name" value="GAD_dom"/>
</dbReference>
<dbReference type="InterPro" id="IPR012340">
    <property type="entry name" value="NA-bd_OB-fold"/>
</dbReference>
<dbReference type="InterPro" id="IPR004365">
    <property type="entry name" value="NA-bd_OB_tRNA"/>
</dbReference>
<dbReference type="NCBIfam" id="TIGR00459">
    <property type="entry name" value="aspS_bact"/>
    <property type="match status" value="1"/>
</dbReference>
<dbReference type="NCBIfam" id="NF001750">
    <property type="entry name" value="PRK00476.1"/>
    <property type="match status" value="1"/>
</dbReference>
<dbReference type="PANTHER" id="PTHR22594:SF5">
    <property type="entry name" value="ASPARTATE--TRNA LIGASE, MITOCHONDRIAL"/>
    <property type="match status" value="1"/>
</dbReference>
<dbReference type="PANTHER" id="PTHR22594">
    <property type="entry name" value="ASPARTYL/LYSYL-TRNA SYNTHETASE"/>
    <property type="match status" value="1"/>
</dbReference>
<dbReference type="Pfam" id="PF02938">
    <property type="entry name" value="GAD"/>
    <property type="match status" value="1"/>
</dbReference>
<dbReference type="Pfam" id="PF00152">
    <property type="entry name" value="tRNA-synt_2"/>
    <property type="match status" value="1"/>
</dbReference>
<dbReference type="Pfam" id="PF01336">
    <property type="entry name" value="tRNA_anti-codon"/>
    <property type="match status" value="1"/>
</dbReference>
<dbReference type="PRINTS" id="PR01042">
    <property type="entry name" value="TRNASYNTHASP"/>
</dbReference>
<dbReference type="SUPFAM" id="SSF55681">
    <property type="entry name" value="Class II aaRS and biotin synthetases"/>
    <property type="match status" value="1"/>
</dbReference>
<dbReference type="SUPFAM" id="SSF55261">
    <property type="entry name" value="GAD domain-like"/>
    <property type="match status" value="1"/>
</dbReference>
<dbReference type="SUPFAM" id="SSF50249">
    <property type="entry name" value="Nucleic acid-binding proteins"/>
    <property type="match status" value="1"/>
</dbReference>
<dbReference type="PROSITE" id="PS50862">
    <property type="entry name" value="AA_TRNA_LIGASE_II"/>
    <property type="match status" value="1"/>
</dbReference>
<organism>
    <name type="scientific">Mus musculus</name>
    <name type="common">Mouse</name>
    <dbReference type="NCBI Taxonomy" id="10090"/>
    <lineage>
        <taxon>Eukaryota</taxon>
        <taxon>Metazoa</taxon>
        <taxon>Chordata</taxon>
        <taxon>Craniata</taxon>
        <taxon>Vertebrata</taxon>
        <taxon>Euteleostomi</taxon>
        <taxon>Mammalia</taxon>
        <taxon>Eutheria</taxon>
        <taxon>Euarchontoglires</taxon>
        <taxon>Glires</taxon>
        <taxon>Rodentia</taxon>
        <taxon>Myomorpha</taxon>
        <taxon>Muroidea</taxon>
        <taxon>Muridae</taxon>
        <taxon>Murinae</taxon>
        <taxon>Mus</taxon>
        <taxon>Mus</taxon>
    </lineage>
</organism>
<reference key="1">
    <citation type="journal article" date="2005" name="Science">
        <title>The transcriptional landscape of the mammalian genome.</title>
        <authorList>
            <person name="Carninci P."/>
            <person name="Kasukawa T."/>
            <person name="Katayama S."/>
            <person name="Gough J."/>
            <person name="Frith M.C."/>
            <person name="Maeda N."/>
            <person name="Oyama R."/>
            <person name="Ravasi T."/>
            <person name="Lenhard B."/>
            <person name="Wells C."/>
            <person name="Kodzius R."/>
            <person name="Shimokawa K."/>
            <person name="Bajic V.B."/>
            <person name="Brenner S.E."/>
            <person name="Batalov S."/>
            <person name="Forrest A.R."/>
            <person name="Zavolan M."/>
            <person name="Davis M.J."/>
            <person name="Wilming L.G."/>
            <person name="Aidinis V."/>
            <person name="Allen J.E."/>
            <person name="Ambesi-Impiombato A."/>
            <person name="Apweiler R."/>
            <person name="Aturaliya R.N."/>
            <person name="Bailey T.L."/>
            <person name="Bansal M."/>
            <person name="Baxter L."/>
            <person name="Beisel K.W."/>
            <person name="Bersano T."/>
            <person name="Bono H."/>
            <person name="Chalk A.M."/>
            <person name="Chiu K.P."/>
            <person name="Choudhary V."/>
            <person name="Christoffels A."/>
            <person name="Clutterbuck D.R."/>
            <person name="Crowe M.L."/>
            <person name="Dalla E."/>
            <person name="Dalrymple B.P."/>
            <person name="de Bono B."/>
            <person name="Della Gatta G."/>
            <person name="di Bernardo D."/>
            <person name="Down T."/>
            <person name="Engstrom P."/>
            <person name="Fagiolini M."/>
            <person name="Faulkner G."/>
            <person name="Fletcher C.F."/>
            <person name="Fukushima T."/>
            <person name="Furuno M."/>
            <person name="Futaki S."/>
            <person name="Gariboldi M."/>
            <person name="Georgii-Hemming P."/>
            <person name="Gingeras T.R."/>
            <person name="Gojobori T."/>
            <person name="Green R.E."/>
            <person name="Gustincich S."/>
            <person name="Harbers M."/>
            <person name="Hayashi Y."/>
            <person name="Hensch T.K."/>
            <person name="Hirokawa N."/>
            <person name="Hill D."/>
            <person name="Huminiecki L."/>
            <person name="Iacono M."/>
            <person name="Ikeo K."/>
            <person name="Iwama A."/>
            <person name="Ishikawa T."/>
            <person name="Jakt M."/>
            <person name="Kanapin A."/>
            <person name="Katoh M."/>
            <person name="Kawasawa Y."/>
            <person name="Kelso J."/>
            <person name="Kitamura H."/>
            <person name="Kitano H."/>
            <person name="Kollias G."/>
            <person name="Krishnan S.P."/>
            <person name="Kruger A."/>
            <person name="Kummerfeld S.K."/>
            <person name="Kurochkin I.V."/>
            <person name="Lareau L.F."/>
            <person name="Lazarevic D."/>
            <person name="Lipovich L."/>
            <person name="Liu J."/>
            <person name="Liuni S."/>
            <person name="McWilliam S."/>
            <person name="Madan Babu M."/>
            <person name="Madera M."/>
            <person name="Marchionni L."/>
            <person name="Matsuda H."/>
            <person name="Matsuzawa S."/>
            <person name="Miki H."/>
            <person name="Mignone F."/>
            <person name="Miyake S."/>
            <person name="Morris K."/>
            <person name="Mottagui-Tabar S."/>
            <person name="Mulder N."/>
            <person name="Nakano N."/>
            <person name="Nakauchi H."/>
            <person name="Ng P."/>
            <person name="Nilsson R."/>
            <person name="Nishiguchi S."/>
            <person name="Nishikawa S."/>
            <person name="Nori F."/>
            <person name="Ohara O."/>
            <person name="Okazaki Y."/>
            <person name="Orlando V."/>
            <person name="Pang K.C."/>
            <person name="Pavan W.J."/>
            <person name="Pavesi G."/>
            <person name="Pesole G."/>
            <person name="Petrovsky N."/>
            <person name="Piazza S."/>
            <person name="Reed J."/>
            <person name="Reid J.F."/>
            <person name="Ring B.Z."/>
            <person name="Ringwald M."/>
            <person name="Rost B."/>
            <person name="Ruan Y."/>
            <person name="Salzberg S.L."/>
            <person name="Sandelin A."/>
            <person name="Schneider C."/>
            <person name="Schoenbach C."/>
            <person name="Sekiguchi K."/>
            <person name="Semple C.A."/>
            <person name="Seno S."/>
            <person name="Sessa L."/>
            <person name="Sheng Y."/>
            <person name="Shibata Y."/>
            <person name="Shimada H."/>
            <person name="Shimada K."/>
            <person name="Silva D."/>
            <person name="Sinclair B."/>
            <person name="Sperling S."/>
            <person name="Stupka E."/>
            <person name="Sugiura K."/>
            <person name="Sultana R."/>
            <person name="Takenaka Y."/>
            <person name="Taki K."/>
            <person name="Tammoja K."/>
            <person name="Tan S.L."/>
            <person name="Tang S."/>
            <person name="Taylor M.S."/>
            <person name="Tegner J."/>
            <person name="Teichmann S.A."/>
            <person name="Ueda H.R."/>
            <person name="van Nimwegen E."/>
            <person name="Verardo R."/>
            <person name="Wei C.L."/>
            <person name="Yagi K."/>
            <person name="Yamanishi H."/>
            <person name="Zabarovsky E."/>
            <person name="Zhu S."/>
            <person name="Zimmer A."/>
            <person name="Hide W."/>
            <person name="Bult C."/>
            <person name="Grimmond S.M."/>
            <person name="Teasdale R.D."/>
            <person name="Liu E.T."/>
            <person name="Brusic V."/>
            <person name="Quackenbush J."/>
            <person name="Wahlestedt C."/>
            <person name="Mattick J.S."/>
            <person name="Hume D.A."/>
            <person name="Kai C."/>
            <person name="Sasaki D."/>
            <person name="Tomaru Y."/>
            <person name="Fukuda S."/>
            <person name="Kanamori-Katayama M."/>
            <person name="Suzuki M."/>
            <person name="Aoki J."/>
            <person name="Arakawa T."/>
            <person name="Iida J."/>
            <person name="Imamura K."/>
            <person name="Itoh M."/>
            <person name="Kato T."/>
            <person name="Kawaji H."/>
            <person name="Kawagashira N."/>
            <person name="Kawashima T."/>
            <person name="Kojima M."/>
            <person name="Kondo S."/>
            <person name="Konno H."/>
            <person name="Nakano K."/>
            <person name="Ninomiya N."/>
            <person name="Nishio T."/>
            <person name="Okada M."/>
            <person name="Plessy C."/>
            <person name="Shibata K."/>
            <person name="Shiraki T."/>
            <person name="Suzuki S."/>
            <person name="Tagami M."/>
            <person name="Waki K."/>
            <person name="Watahiki A."/>
            <person name="Okamura-Oho Y."/>
            <person name="Suzuki H."/>
            <person name="Kawai J."/>
            <person name="Hayashizaki Y."/>
        </authorList>
    </citation>
    <scope>NUCLEOTIDE SEQUENCE [LARGE SCALE MRNA]</scope>
    <source>
        <strain>C57BL/6J</strain>
        <tissue>Thymus</tissue>
    </source>
</reference>
<reference key="2">
    <citation type="journal article" date="2004" name="Genome Res.">
        <title>The status, quality, and expansion of the NIH full-length cDNA project: the Mammalian Gene Collection (MGC).</title>
        <authorList>
            <consortium name="The MGC Project Team"/>
        </authorList>
    </citation>
    <scope>NUCLEOTIDE SEQUENCE [LARGE SCALE MRNA]</scope>
    <source>
        <strain>C57BL/6J</strain>
        <tissue>Brain</tissue>
    </source>
</reference>
<reference key="3">
    <citation type="journal article" date="2010" name="Cell">
        <title>A tissue-specific atlas of mouse protein phosphorylation and expression.</title>
        <authorList>
            <person name="Huttlin E.L."/>
            <person name="Jedrychowski M.P."/>
            <person name="Elias J.E."/>
            <person name="Goswami T."/>
            <person name="Rad R."/>
            <person name="Beausoleil S.A."/>
            <person name="Villen J."/>
            <person name="Haas W."/>
            <person name="Sowa M.E."/>
            <person name="Gygi S.P."/>
        </authorList>
    </citation>
    <scope>IDENTIFICATION BY MASS SPECTROMETRY [LARGE SCALE ANALYSIS]</scope>
    <source>
        <tissue>Brain</tissue>
        <tissue>Brown adipose tissue</tissue>
        <tissue>Heart</tissue>
        <tissue>Kidney</tissue>
        <tissue>Liver</tissue>
        <tissue>Spleen</tissue>
    </source>
</reference>